<name>SYS_ERYLH</name>
<reference key="1">
    <citation type="journal article" date="2009" name="J. Bacteriol.">
        <title>Complete genome sequence of Erythrobacter litoralis HTCC2594.</title>
        <authorList>
            <person name="Oh H.M."/>
            <person name="Giovannoni S.J."/>
            <person name="Ferriera S."/>
            <person name="Johnson J."/>
            <person name="Cho J.C."/>
        </authorList>
    </citation>
    <scope>NUCLEOTIDE SEQUENCE [LARGE SCALE GENOMIC DNA]</scope>
    <source>
        <strain>HTCC2594</strain>
    </source>
</reference>
<keyword id="KW-0030">Aminoacyl-tRNA synthetase</keyword>
<keyword id="KW-0067">ATP-binding</keyword>
<keyword id="KW-0963">Cytoplasm</keyword>
<keyword id="KW-0436">Ligase</keyword>
<keyword id="KW-0547">Nucleotide-binding</keyword>
<keyword id="KW-0648">Protein biosynthesis</keyword>
<keyword id="KW-1185">Reference proteome</keyword>
<dbReference type="EC" id="6.1.1.11" evidence="1"/>
<dbReference type="EMBL" id="CP000157">
    <property type="protein sequence ID" value="ABC62214.1"/>
    <property type="molecule type" value="Genomic_DNA"/>
</dbReference>
<dbReference type="RefSeq" id="WP_011413092.1">
    <property type="nucleotide sequence ID" value="NC_007722.1"/>
</dbReference>
<dbReference type="SMR" id="Q2NDM7"/>
<dbReference type="STRING" id="314225.ELI_00610"/>
<dbReference type="KEGG" id="eli:ELI_00610"/>
<dbReference type="eggNOG" id="COG0172">
    <property type="taxonomic scope" value="Bacteria"/>
</dbReference>
<dbReference type="HOGENOM" id="CLU_023797_1_1_5"/>
<dbReference type="OrthoDB" id="9804647at2"/>
<dbReference type="UniPathway" id="UPA00906">
    <property type="reaction ID" value="UER00895"/>
</dbReference>
<dbReference type="Proteomes" id="UP000008808">
    <property type="component" value="Chromosome"/>
</dbReference>
<dbReference type="GO" id="GO:0005737">
    <property type="term" value="C:cytoplasm"/>
    <property type="evidence" value="ECO:0007669"/>
    <property type="project" value="UniProtKB-SubCell"/>
</dbReference>
<dbReference type="GO" id="GO:0005524">
    <property type="term" value="F:ATP binding"/>
    <property type="evidence" value="ECO:0007669"/>
    <property type="project" value="UniProtKB-UniRule"/>
</dbReference>
<dbReference type="GO" id="GO:0004828">
    <property type="term" value="F:serine-tRNA ligase activity"/>
    <property type="evidence" value="ECO:0007669"/>
    <property type="project" value="UniProtKB-UniRule"/>
</dbReference>
<dbReference type="GO" id="GO:0016260">
    <property type="term" value="P:selenocysteine biosynthetic process"/>
    <property type="evidence" value="ECO:0007669"/>
    <property type="project" value="UniProtKB-UniRule"/>
</dbReference>
<dbReference type="GO" id="GO:0006434">
    <property type="term" value="P:seryl-tRNA aminoacylation"/>
    <property type="evidence" value="ECO:0007669"/>
    <property type="project" value="UniProtKB-UniRule"/>
</dbReference>
<dbReference type="CDD" id="cd00770">
    <property type="entry name" value="SerRS_core"/>
    <property type="match status" value="1"/>
</dbReference>
<dbReference type="Gene3D" id="3.30.930.10">
    <property type="entry name" value="Bira Bifunctional Protein, Domain 2"/>
    <property type="match status" value="1"/>
</dbReference>
<dbReference type="Gene3D" id="1.10.287.40">
    <property type="entry name" value="Serine-tRNA synthetase, tRNA binding domain"/>
    <property type="match status" value="1"/>
</dbReference>
<dbReference type="HAMAP" id="MF_00176">
    <property type="entry name" value="Ser_tRNA_synth_type1"/>
    <property type="match status" value="1"/>
</dbReference>
<dbReference type="InterPro" id="IPR002314">
    <property type="entry name" value="aa-tRNA-synt_IIb"/>
</dbReference>
<dbReference type="InterPro" id="IPR006195">
    <property type="entry name" value="aa-tRNA-synth_II"/>
</dbReference>
<dbReference type="InterPro" id="IPR045864">
    <property type="entry name" value="aa-tRNA-synth_II/BPL/LPL"/>
</dbReference>
<dbReference type="InterPro" id="IPR002317">
    <property type="entry name" value="Ser-tRNA-ligase_type_1"/>
</dbReference>
<dbReference type="InterPro" id="IPR015866">
    <property type="entry name" value="Ser-tRNA-synth_1_N"/>
</dbReference>
<dbReference type="InterPro" id="IPR042103">
    <property type="entry name" value="SerRS_1_N_sf"/>
</dbReference>
<dbReference type="InterPro" id="IPR033729">
    <property type="entry name" value="SerRS_core"/>
</dbReference>
<dbReference type="InterPro" id="IPR010978">
    <property type="entry name" value="tRNA-bd_arm"/>
</dbReference>
<dbReference type="NCBIfam" id="TIGR00414">
    <property type="entry name" value="serS"/>
    <property type="match status" value="1"/>
</dbReference>
<dbReference type="PANTHER" id="PTHR43697:SF1">
    <property type="entry name" value="SERINE--TRNA LIGASE"/>
    <property type="match status" value="1"/>
</dbReference>
<dbReference type="PANTHER" id="PTHR43697">
    <property type="entry name" value="SERYL-TRNA SYNTHETASE"/>
    <property type="match status" value="1"/>
</dbReference>
<dbReference type="Pfam" id="PF02403">
    <property type="entry name" value="Seryl_tRNA_N"/>
    <property type="match status" value="1"/>
</dbReference>
<dbReference type="Pfam" id="PF00587">
    <property type="entry name" value="tRNA-synt_2b"/>
    <property type="match status" value="1"/>
</dbReference>
<dbReference type="PIRSF" id="PIRSF001529">
    <property type="entry name" value="Ser-tRNA-synth_IIa"/>
    <property type="match status" value="1"/>
</dbReference>
<dbReference type="PRINTS" id="PR00981">
    <property type="entry name" value="TRNASYNTHSER"/>
</dbReference>
<dbReference type="SUPFAM" id="SSF55681">
    <property type="entry name" value="Class II aaRS and biotin synthetases"/>
    <property type="match status" value="1"/>
</dbReference>
<dbReference type="SUPFAM" id="SSF46589">
    <property type="entry name" value="tRNA-binding arm"/>
    <property type="match status" value="1"/>
</dbReference>
<dbReference type="PROSITE" id="PS50862">
    <property type="entry name" value="AA_TRNA_LIGASE_II"/>
    <property type="match status" value="1"/>
</dbReference>
<proteinExistence type="inferred from homology"/>
<accession>Q2NDM7</accession>
<feature type="chain" id="PRO_1000019680" description="Serine--tRNA ligase">
    <location>
        <begin position="1"/>
        <end position="426"/>
    </location>
</feature>
<feature type="binding site" evidence="1">
    <location>
        <begin position="230"/>
        <end position="232"/>
    </location>
    <ligand>
        <name>L-serine</name>
        <dbReference type="ChEBI" id="CHEBI:33384"/>
    </ligand>
</feature>
<feature type="binding site" evidence="1">
    <location>
        <begin position="261"/>
        <end position="263"/>
    </location>
    <ligand>
        <name>ATP</name>
        <dbReference type="ChEBI" id="CHEBI:30616"/>
    </ligand>
</feature>
<feature type="binding site" evidence="1">
    <location>
        <position position="284"/>
    </location>
    <ligand>
        <name>L-serine</name>
        <dbReference type="ChEBI" id="CHEBI:33384"/>
    </ligand>
</feature>
<feature type="binding site" evidence="1">
    <location>
        <begin position="348"/>
        <end position="351"/>
    </location>
    <ligand>
        <name>ATP</name>
        <dbReference type="ChEBI" id="CHEBI:30616"/>
    </ligand>
</feature>
<feature type="binding site" evidence="1">
    <location>
        <position position="384"/>
    </location>
    <ligand>
        <name>L-serine</name>
        <dbReference type="ChEBI" id="CHEBI:33384"/>
    </ligand>
</feature>
<gene>
    <name evidence="1" type="primary">serS</name>
    <name type="ordered locus">ELI_00610</name>
</gene>
<comment type="function">
    <text evidence="1">Catalyzes the attachment of serine to tRNA(Ser). Is also able to aminoacylate tRNA(Sec) with serine, to form the misacylated tRNA L-seryl-tRNA(Sec), which will be further converted into selenocysteinyl-tRNA(Sec).</text>
</comment>
<comment type="catalytic activity">
    <reaction evidence="1">
        <text>tRNA(Ser) + L-serine + ATP = L-seryl-tRNA(Ser) + AMP + diphosphate + H(+)</text>
        <dbReference type="Rhea" id="RHEA:12292"/>
        <dbReference type="Rhea" id="RHEA-COMP:9669"/>
        <dbReference type="Rhea" id="RHEA-COMP:9703"/>
        <dbReference type="ChEBI" id="CHEBI:15378"/>
        <dbReference type="ChEBI" id="CHEBI:30616"/>
        <dbReference type="ChEBI" id="CHEBI:33019"/>
        <dbReference type="ChEBI" id="CHEBI:33384"/>
        <dbReference type="ChEBI" id="CHEBI:78442"/>
        <dbReference type="ChEBI" id="CHEBI:78533"/>
        <dbReference type="ChEBI" id="CHEBI:456215"/>
        <dbReference type="EC" id="6.1.1.11"/>
    </reaction>
</comment>
<comment type="catalytic activity">
    <reaction evidence="1">
        <text>tRNA(Sec) + L-serine + ATP = L-seryl-tRNA(Sec) + AMP + diphosphate + H(+)</text>
        <dbReference type="Rhea" id="RHEA:42580"/>
        <dbReference type="Rhea" id="RHEA-COMP:9742"/>
        <dbReference type="Rhea" id="RHEA-COMP:10128"/>
        <dbReference type="ChEBI" id="CHEBI:15378"/>
        <dbReference type="ChEBI" id="CHEBI:30616"/>
        <dbReference type="ChEBI" id="CHEBI:33019"/>
        <dbReference type="ChEBI" id="CHEBI:33384"/>
        <dbReference type="ChEBI" id="CHEBI:78442"/>
        <dbReference type="ChEBI" id="CHEBI:78533"/>
        <dbReference type="ChEBI" id="CHEBI:456215"/>
        <dbReference type="EC" id="6.1.1.11"/>
    </reaction>
</comment>
<comment type="pathway">
    <text evidence="1">Aminoacyl-tRNA biosynthesis; selenocysteinyl-tRNA(Sec) biosynthesis; L-seryl-tRNA(Sec) from L-serine and tRNA(Sec): step 1/1.</text>
</comment>
<comment type="subunit">
    <text evidence="1">Homodimer. The tRNA molecule binds across the dimer.</text>
</comment>
<comment type="subcellular location">
    <subcellularLocation>
        <location evidence="1">Cytoplasm</location>
    </subcellularLocation>
</comment>
<comment type="domain">
    <text evidence="1">Consists of two distinct domains, a catalytic core and a N-terminal extension that is involved in tRNA binding.</text>
</comment>
<comment type="similarity">
    <text evidence="1">Belongs to the class-II aminoacyl-tRNA synthetase family. Type-1 seryl-tRNA synthetase subfamily.</text>
</comment>
<evidence type="ECO:0000255" key="1">
    <source>
        <dbReference type="HAMAP-Rule" id="MF_00176"/>
    </source>
</evidence>
<sequence>MHDIRQIRDNPEAFDAALARRGHEPVAAEILALDEQCRAVTTKMQEAQSRRNEASKAIGQAMGQGNTEKAEALKAEVADLKQTLPRLEDEDRELKMRLENALAVIPNLPLDDVPDGADESDNIEVGTWGTKREFSFEPREHADIGPALGMDFETGARLSGARFTFLRGGMARLHRALGQFMLDRQVSEYGYAECAPPVLVRDEAMYGTDKLPKFAEDSFQTTDGRWLIPTAEVSLTASVMDQILDDAALPMRLTALTPCFRSEAGAAGKDTRGFIRQHQFEKCELVSIVRPENSAAEHERMTEAAESVLQALDLPYRKMLLCTGDMGFGARKTYDLEVWLPGQGAYREISSCSNTGDFQARRMNARYRPEGEKKTAFVHTLNGSGLAVGRTLVAVIENYQEEDGSVAVPEVLAPYMGGAMKLEPTP</sequence>
<organism>
    <name type="scientific">Erythrobacter litoralis (strain HTCC2594)</name>
    <dbReference type="NCBI Taxonomy" id="314225"/>
    <lineage>
        <taxon>Bacteria</taxon>
        <taxon>Pseudomonadati</taxon>
        <taxon>Pseudomonadota</taxon>
        <taxon>Alphaproteobacteria</taxon>
        <taxon>Sphingomonadales</taxon>
        <taxon>Erythrobacteraceae</taxon>
        <taxon>Erythrobacter/Porphyrobacter group</taxon>
        <taxon>Erythrobacter</taxon>
    </lineage>
</organism>
<protein>
    <recommendedName>
        <fullName evidence="1">Serine--tRNA ligase</fullName>
        <ecNumber evidence="1">6.1.1.11</ecNumber>
    </recommendedName>
    <alternativeName>
        <fullName evidence="1">Seryl-tRNA synthetase</fullName>
        <shortName evidence="1">SerRS</shortName>
    </alternativeName>
    <alternativeName>
        <fullName evidence="1">Seryl-tRNA(Ser/Sec) synthetase</fullName>
    </alternativeName>
</protein>